<feature type="chain" id="PRO_1000124173" description="Na(+)-translocating NADH-quinone reductase subunit A">
    <location>
        <begin position="1"/>
        <end position="447"/>
    </location>
</feature>
<proteinExistence type="inferred from homology"/>
<organism>
    <name type="scientific">Neisseria gonorrhoeae (strain NCCP11945)</name>
    <dbReference type="NCBI Taxonomy" id="521006"/>
    <lineage>
        <taxon>Bacteria</taxon>
        <taxon>Pseudomonadati</taxon>
        <taxon>Pseudomonadota</taxon>
        <taxon>Betaproteobacteria</taxon>
        <taxon>Neisseriales</taxon>
        <taxon>Neisseriaceae</taxon>
        <taxon>Neisseria</taxon>
    </lineage>
</organism>
<protein>
    <recommendedName>
        <fullName evidence="1">Na(+)-translocating NADH-quinone reductase subunit A</fullName>
        <shortName evidence="1">Na(+)-NQR subunit A</shortName>
        <shortName evidence="1">Na(+)-translocating NQR subunit A</shortName>
        <ecNumber evidence="1">7.2.1.1</ecNumber>
    </recommendedName>
    <alternativeName>
        <fullName evidence="1">NQR complex subunit A</fullName>
    </alternativeName>
    <alternativeName>
        <fullName evidence="1">NQR-1 subunit A</fullName>
    </alternativeName>
</protein>
<keyword id="KW-0406">Ion transport</keyword>
<keyword id="KW-0520">NAD</keyword>
<keyword id="KW-0915">Sodium</keyword>
<keyword id="KW-0739">Sodium transport</keyword>
<keyword id="KW-1278">Translocase</keyword>
<keyword id="KW-0813">Transport</keyword>
<keyword id="KW-0830">Ubiquinone</keyword>
<comment type="function">
    <text evidence="1">NQR complex catalyzes the reduction of ubiquinone-1 to ubiquinol by two successive reactions, coupled with the transport of Na(+) ions from the cytoplasm to the periplasm. NqrA to NqrE are probably involved in the second step, the conversion of ubisemiquinone to ubiquinol.</text>
</comment>
<comment type="catalytic activity">
    <reaction evidence="1">
        <text>a ubiquinone + n Na(+)(in) + NADH + H(+) = a ubiquinol + n Na(+)(out) + NAD(+)</text>
        <dbReference type="Rhea" id="RHEA:47748"/>
        <dbReference type="Rhea" id="RHEA-COMP:9565"/>
        <dbReference type="Rhea" id="RHEA-COMP:9566"/>
        <dbReference type="ChEBI" id="CHEBI:15378"/>
        <dbReference type="ChEBI" id="CHEBI:16389"/>
        <dbReference type="ChEBI" id="CHEBI:17976"/>
        <dbReference type="ChEBI" id="CHEBI:29101"/>
        <dbReference type="ChEBI" id="CHEBI:57540"/>
        <dbReference type="ChEBI" id="CHEBI:57945"/>
        <dbReference type="EC" id="7.2.1.1"/>
    </reaction>
</comment>
<comment type="subunit">
    <text evidence="1">Composed of six subunits; NqrA, NqrB, NqrC, NqrD, NqrE and NqrF.</text>
</comment>
<comment type="similarity">
    <text evidence="1">Belongs to the NqrA family.</text>
</comment>
<gene>
    <name evidence="1" type="primary">nqrA</name>
    <name type="ordered locus">NGK_1668</name>
</gene>
<evidence type="ECO:0000255" key="1">
    <source>
        <dbReference type="HAMAP-Rule" id="MF_00425"/>
    </source>
</evidence>
<dbReference type="EC" id="7.2.1.1" evidence="1"/>
<dbReference type="EMBL" id="CP001050">
    <property type="protein sequence ID" value="ACF30316.1"/>
    <property type="molecule type" value="Genomic_DNA"/>
</dbReference>
<dbReference type="RefSeq" id="WP_012503818.1">
    <property type="nucleotide sequence ID" value="NC_011035.1"/>
</dbReference>
<dbReference type="SMR" id="B4RNF8"/>
<dbReference type="KEGG" id="ngk:NGK_1668"/>
<dbReference type="HOGENOM" id="CLU_046656_0_0_4"/>
<dbReference type="Proteomes" id="UP000002564">
    <property type="component" value="Chromosome"/>
</dbReference>
<dbReference type="GO" id="GO:0016655">
    <property type="term" value="F:oxidoreductase activity, acting on NAD(P)H, quinone or similar compound as acceptor"/>
    <property type="evidence" value="ECO:0007669"/>
    <property type="project" value="UniProtKB-UniRule"/>
</dbReference>
<dbReference type="GO" id="GO:0006814">
    <property type="term" value="P:sodium ion transport"/>
    <property type="evidence" value="ECO:0007669"/>
    <property type="project" value="UniProtKB-UniRule"/>
</dbReference>
<dbReference type="HAMAP" id="MF_00425">
    <property type="entry name" value="NqrA"/>
    <property type="match status" value="1"/>
</dbReference>
<dbReference type="InterPro" id="IPR008703">
    <property type="entry name" value="NqrA"/>
</dbReference>
<dbReference type="InterPro" id="IPR056148">
    <property type="entry name" value="NQRA_2nd"/>
</dbReference>
<dbReference type="InterPro" id="IPR022615">
    <property type="entry name" value="NqrA_C_domain"/>
</dbReference>
<dbReference type="InterPro" id="IPR056147">
    <property type="entry name" value="NQRA_N"/>
</dbReference>
<dbReference type="NCBIfam" id="TIGR01936">
    <property type="entry name" value="nqrA"/>
    <property type="match status" value="1"/>
</dbReference>
<dbReference type="NCBIfam" id="NF003759">
    <property type="entry name" value="PRK05352.1-2"/>
    <property type="match status" value="1"/>
</dbReference>
<dbReference type="NCBIfam" id="NF003761">
    <property type="entry name" value="PRK05352.1-4"/>
    <property type="match status" value="1"/>
</dbReference>
<dbReference type="PANTHER" id="PTHR37839">
    <property type="entry name" value="NA(+)-TRANSLOCATING NADH-QUINONE REDUCTASE SUBUNIT A"/>
    <property type="match status" value="1"/>
</dbReference>
<dbReference type="PANTHER" id="PTHR37839:SF1">
    <property type="entry name" value="NA(+)-TRANSLOCATING NADH-QUINONE REDUCTASE SUBUNIT A"/>
    <property type="match status" value="1"/>
</dbReference>
<dbReference type="Pfam" id="PF24836">
    <property type="entry name" value="NQRA_2nd"/>
    <property type="match status" value="1"/>
</dbReference>
<dbReference type="Pfam" id="PF05896">
    <property type="entry name" value="NQRA_N"/>
    <property type="match status" value="1"/>
</dbReference>
<dbReference type="Pfam" id="PF11973">
    <property type="entry name" value="NQRA_SLBB"/>
    <property type="match status" value="1"/>
</dbReference>
<accession>B4RNF8</accession>
<reference key="1">
    <citation type="journal article" date="2008" name="J. Bacteriol.">
        <title>Complete genome sequence of Neisseria gonorrhoeae NCCP11945.</title>
        <authorList>
            <person name="Chung G.T."/>
            <person name="Yoo J.S."/>
            <person name="Oh H.B."/>
            <person name="Lee Y.S."/>
            <person name="Cha S.H."/>
            <person name="Kim S.J."/>
            <person name="Yoo C.K."/>
        </authorList>
    </citation>
    <scope>NUCLEOTIDE SEQUENCE [LARGE SCALE GENOMIC DNA]</scope>
    <source>
        <strain>NCCP11945</strain>
    </source>
</reference>
<name>NQRA_NEIG2</name>
<sequence>MIKIKKGLNLPIAGRPEQVIYDGPAITEVALLGEEYVGMRPSMKIKEGEAVKKGQVLFEDKKNPGVVFTAPASGKIAAIHRGEKRVLQSVVIAVEGNDEIEFERYVPEALAKLSSEEVRRNLIQSGLWTALRTRPFSKIPAVDAEPFAIFVNAMDTNPLAADPTVIIKEAAEDFKRGLLVLSRLTERKIHVCKAAGADVPSENAANIETHEFGGPHPAGLSGTHIHFIEPVGANKTVWTINYQDVIAIGRLFVTGRLNTERVVALGGLQVNKPRLLRTVLGAKVSQLTAGELVDADNRVISGSVLNGAIAQGAHDYLGRYHNQISVIEEGRGKELFGWVAPQPDKYSITRTTLGHFLKNKLFKFTTAVNGGDRAMVPIGTYERVMPLDILPTLLLRDLIVGDTDSAQALGCLELDEEDLALCSFVCPGKYEYGPLLRKVLETIEKEG</sequence>